<comment type="function">
    <text evidence="3">Catalyzes the 6-electron oxidation of protoporphyrinogen-IX to form protoporphyrin-IX.</text>
</comment>
<comment type="function">
    <text evidence="3">Provides precursor for the mitochondrial and plastidic heme synthesis and the predominant chlorophyll synthesis in plastids.</text>
</comment>
<comment type="catalytic activity">
    <reaction>
        <text>protoporphyrinogen IX + 3 O2 = protoporphyrin IX + 3 H2O2</text>
        <dbReference type="Rhea" id="RHEA:25576"/>
        <dbReference type="ChEBI" id="CHEBI:15379"/>
        <dbReference type="ChEBI" id="CHEBI:16240"/>
        <dbReference type="ChEBI" id="CHEBI:57306"/>
        <dbReference type="ChEBI" id="CHEBI:57307"/>
        <dbReference type="EC" id="1.3.3.4"/>
    </reaction>
</comment>
<comment type="cofactor">
    <cofactor evidence="2">
        <name>FAD</name>
        <dbReference type="ChEBI" id="CHEBI:57692"/>
    </cofactor>
    <text evidence="2">Binds 1 FAD per subunit.</text>
</comment>
<comment type="activity regulation">
    <text>Inhibited by the herbicide acifluorfen.</text>
</comment>
<comment type="pathway">
    <text>Porphyrin-containing compound metabolism; protoporphyrin-IX biosynthesis; protoporphyrin-IX from protoporphyrinogen-IX: step 1/1.</text>
</comment>
<comment type="subcellular location">
    <subcellularLocation>
        <location evidence="3">Mitochondrion</location>
    </subcellularLocation>
</comment>
<comment type="developmental stage">
    <text evidence="3">Expressed in expanding premature leaves. Decreased expression in oldest leaves. Also detected in roots.</text>
</comment>
<comment type="induction">
    <text evidence="3">Oscillating expression during diurnal growth. Maximal expression in the dark period.</text>
</comment>
<comment type="similarity">
    <text evidence="4">Belongs to the protoporphyrinogen/coproporphyrinogen oxidase family. Protoporphyrinogen oxidase subfamily.</text>
</comment>
<protein>
    <recommendedName>
        <fullName>Protoporphyrinogen oxidase, mitochondrial</fullName>
        <ecNumber>1.3.3.4</ecNumber>
    </recommendedName>
    <alternativeName>
        <fullName>PX-2</fullName>
    </alternativeName>
    <alternativeName>
        <fullName>Protoporphyrinogen IX oxidase isozyme II</fullName>
        <shortName>PPO II</shortName>
        <shortName>PPX II</shortName>
    </alternativeName>
</protein>
<reference key="1">
    <citation type="journal article" date="1997" name="Proc. Natl. Acad. Sci. U.S.A.">
        <title>Cloning and characterization of a plastidal and a mitochondrial isoform of tobacco protoporphyrinogen IX oxidase.</title>
        <authorList>
            <person name="Lermontova I."/>
            <person name="Kruse E."/>
            <person name="Mock H.-P."/>
            <person name="Grimm B."/>
        </authorList>
    </citation>
    <scope>NUCLEOTIDE SEQUENCE [MRNA]</scope>
    <scope>FUNCTION</scope>
    <scope>DEVELOPMENTAL STAGE</scope>
    <scope>INDUCTION</scope>
    <scope>SUBCELLULAR LOCATION</scope>
    <source>
        <strain>cv. SR1</strain>
    </source>
</reference>
<reference key="2">
    <citation type="journal article" date="1998" name="Plant Physiol.">
        <title>Molecular characterization of photomixotrophic cultured tobacco cells resistant to protoporphyrinogen oxidase-inhibiting herbicides.</title>
        <authorList>
            <person name="Watanabe N."/>
            <person name="Che F."/>
            <person name="Iwano M."/>
            <person name="Takayama S."/>
            <person name="Nakano T."/>
            <person name="Yoshida S."/>
            <person name="Isogai A."/>
        </authorList>
    </citation>
    <scope>NUCLEOTIDE SEQUENCE [MRNA]</scope>
    <source>
        <strain>cv. Samsun NN</strain>
    </source>
</reference>
<reference key="3">
    <citation type="submission" date="1998-01" db="EMBL/GenBank/DDBJ databases">
        <title>The molecular basis of photobleaching herbicide resistance in Tobacco.</title>
        <authorList>
            <person name="Horikoshi M."/>
            <person name="Mametsuka K."/>
            <person name="Hirooka T."/>
        </authorList>
    </citation>
    <scope>NUCLEOTIDE SEQUENCE [MRNA]</scope>
    <source>
        <strain>cv. SR1</strain>
    </source>
</reference>
<reference key="4">
    <citation type="journal article" date="2004" name="EMBO J.">
        <title>Crystal structure of protoporphyrinogen IX oxidase: a key enzyme in haem and chlorophyll biosynthesis.</title>
        <authorList>
            <person name="Koch M."/>
            <person name="Breithaupt C."/>
            <person name="Kiefersauer R."/>
            <person name="Freigang J."/>
            <person name="Huber R."/>
            <person name="Messerschmidt A."/>
        </authorList>
    </citation>
    <scope>X-RAY CRYSTALLOGRAPHY (2.90 ANGSTROMS) IN COMPLEX WITH SYNTHETIC INHIBITOR AND FAD</scope>
    <scope>IDENTIFICATION BY MASS SPECTROMETRY</scope>
    <scope>COFACTOR</scope>
</reference>
<sequence length="504" mass="55407">MAPSAGEDKHSSAKRVAVIGAGVSGLAAAYKLKIHGLNVTVFEAEGKAGGKLRSVSQDGLIWDEGANTMTESEGDVTFLIDSLGLREKQQFPLSQNKRYIARNGTPVLLPSNPIDLIKSNFLSTGSKLQMLLEPILWKNKKLSQVSDSHESVSGFFQRHFGKEVVDYLIDPFVAGTCGGDPDSLSMHHSFPELWNLEKRFGSVILGAIRSKLSPKNEKKQGPPKTSANKKRQRGSFSFLGGMQTLTDAICKDLREDELRLNSRVLELSCSCTEDSAIDSWSIISASPHKRQSEEESFDAVIMTAPLCDVKSMKIAKRGNPFLLNFIPEVDYVPLSVVITTFKRENVKYPLEGFGVLVPSKEQQHGLKTLGTLFSSMMFPDRAPNNVYLYTTFVGGSRNRELAKASRTELKEIVTSDLKQLLGAEGEPTYVNHLYWSKAFPLYGHNYDSVLDAIDKMEKNLPGLFYAGNHRGGLSVGKALSSGCNAADLVISYLESVSTDSKRHC</sequence>
<accession>O24164</accession>
<gene>
    <name type="primary">PPXII</name>
    <name type="synonym">PPOX2</name>
</gene>
<dbReference type="EC" id="1.3.3.4"/>
<dbReference type="EMBL" id="Y13466">
    <property type="protein sequence ID" value="CAA73866.1"/>
    <property type="molecule type" value="mRNA"/>
</dbReference>
<dbReference type="EMBL" id="AB020500">
    <property type="protein sequence ID" value="BAA34712.1"/>
    <property type="molecule type" value="mRNA"/>
</dbReference>
<dbReference type="EMBL" id="AF044129">
    <property type="protein sequence ID" value="AAD02291.1"/>
    <property type="molecule type" value="mRNA"/>
</dbReference>
<dbReference type="PIR" id="T04076">
    <property type="entry name" value="T04076"/>
</dbReference>
<dbReference type="RefSeq" id="NP_001312887.1">
    <property type="nucleotide sequence ID" value="NM_001325958.1"/>
</dbReference>
<dbReference type="PDB" id="1SEZ">
    <property type="method" value="X-ray"/>
    <property type="resolution" value="2.90 A"/>
    <property type="chains" value="A/B=1-504"/>
</dbReference>
<dbReference type="PDBsum" id="1SEZ"/>
<dbReference type="SMR" id="O24164"/>
<dbReference type="STRING" id="4097.O24164"/>
<dbReference type="BindingDB" id="O24164"/>
<dbReference type="ChEMBL" id="CHEMBL1926489"/>
<dbReference type="PaxDb" id="4097-O24164"/>
<dbReference type="GeneID" id="107815753"/>
<dbReference type="KEGG" id="nta:107815753"/>
<dbReference type="OrthoDB" id="419752at2759"/>
<dbReference type="PhylomeDB" id="O24164"/>
<dbReference type="BioCyc" id="MetaCyc:MONOMER-11759"/>
<dbReference type="BRENDA" id="1.3.3.4">
    <property type="organism ID" value="3645"/>
</dbReference>
<dbReference type="UniPathway" id="UPA00251">
    <property type="reaction ID" value="UER00324"/>
</dbReference>
<dbReference type="EvolutionaryTrace" id="O24164"/>
<dbReference type="Proteomes" id="UP000084051">
    <property type="component" value="Unplaced"/>
</dbReference>
<dbReference type="GO" id="GO:0005739">
    <property type="term" value="C:mitochondrion"/>
    <property type="evidence" value="ECO:0007669"/>
    <property type="project" value="UniProtKB-SubCell"/>
</dbReference>
<dbReference type="GO" id="GO:0016491">
    <property type="term" value="F:oxidoreductase activity"/>
    <property type="evidence" value="ECO:0000318"/>
    <property type="project" value="GO_Central"/>
</dbReference>
<dbReference type="GO" id="GO:0004729">
    <property type="term" value="F:oxygen-dependent protoporphyrinogen oxidase activity"/>
    <property type="evidence" value="ECO:0007669"/>
    <property type="project" value="UniProtKB-EC"/>
</dbReference>
<dbReference type="GO" id="GO:0006782">
    <property type="term" value="P:protoporphyrinogen IX biosynthetic process"/>
    <property type="evidence" value="ECO:0007669"/>
    <property type="project" value="UniProtKB-UniPathway"/>
</dbReference>
<dbReference type="FunFam" id="1.10.3110.10:FF:000003">
    <property type="entry name" value="Protoporphyrinogen oxidase"/>
    <property type="match status" value="1"/>
</dbReference>
<dbReference type="Gene3D" id="3.50.50.60">
    <property type="entry name" value="FAD/NAD(P)-binding domain"/>
    <property type="match status" value="1"/>
</dbReference>
<dbReference type="Gene3D" id="1.10.3110.10">
    <property type="entry name" value="protoporphyrinogen ix oxidase, domain 3"/>
    <property type="match status" value="1"/>
</dbReference>
<dbReference type="Gene3D" id="3.90.660.20">
    <property type="entry name" value="Protoporphyrinogen oxidase, mitochondrial, domain 2"/>
    <property type="match status" value="1"/>
</dbReference>
<dbReference type="InterPro" id="IPR002937">
    <property type="entry name" value="Amino_oxidase"/>
</dbReference>
<dbReference type="InterPro" id="IPR036188">
    <property type="entry name" value="FAD/NAD-bd_sf"/>
</dbReference>
<dbReference type="InterPro" id="IPR004572">
    <property type="entry name" value="Protoporphyrinogen_oxidase"/>
</dbReference>
<dbReference type="InterPro" id="IPR050464">
    <property type="entry name" value="Zeta_carotene_desat/Oxidored"/>
</dbReference>
<dbReference type="NCBIfam" id="TIGR00562">
    <property type="entry name" value="proto_IX_ox"/>
    <property type="match status" value="1"/>
</dbReference>
<dbReference type="PANTHER" id="PTHR42923">
    <property type="entry name" value="PROTOPORPHYRINOGEN OXIDASE"/>
    <property type="match status" value="1"/>
</dbReference>
<dbReference type="PANTHER" id="PTHR42923:SF44">
    <property type="entry name" value="PROTOPORPHYRINOGEN OXIDASE 2, CHLOROPLASTIC_MITOCHONDRIAL"/>
    <property type="match status" value="1"/>
</dbReference>
<dbReference type="Pfam" id="PF01593">
    <property type="entry name" value="Amino_oxidase"/>
    <property type="match status" value="1"/>
</dbReference>
<dbReference type="PRINTS" id="PR00419">
    <property type="entry name" value="ADXRDTASE"/>
</dbReference>
<dbReference type="SUPFAM" id="SSF54373">
    <property type="entry name" value="FAD-linked reductases, C-terminal domain"/>
    <property type="match status" value="1"/>
</dbReference>
<dbReference type="SUPFAM" id="SSF51905">
    <property type="entry name" value="FAD/NAD(P)-binding domain"/>
    <property type="match status" value="1"/>
</dbReference>
<feature type="chain" id="PRO_0000135273" description="Protoporphyrinogen oxidase, mitochondrial">
    <location>
        <begin position="1"/>
        <end position="504"/>
    </location>
</feature>
<feature type="region of interest" description="Disordered" evidence="1">
    <location>
        <begin position="213"/>
        <end position="232"/>
    </location>
</feature>
<feature type="binding site" evidence="2">
    <location>
        <begin position="20"/>
        <end position="25"/>
    </location>
    <ligand>
        <name>FAD</name>
        <dbReference type="ChEBI" id="CHEBI:57692"/>
    </ligand>
</feature>
<feature type="binding site" evidence="2">
    <location>
        <begin position="43"/>
        <end position="44"/>
    </location>
    <ligand>
        <name>FAD</name>
        <dbReference type="ChEBI" id="CHEBI:57692"/>
    </ligand>
</feature>
<feature type="binding site" evidence="2">
    <location>
        <position position="51"/>
    </location>
    <ligand>
        <name>FAD</name>
        <dbReference type="ChEBI" id="CHEBI:57692"/>
    </ligand>
</feature>
<feature type="binding site" evidence="2">
    <location>
        <begin position="65"/>
        <end position="68"/>
    </location>
    <ligand>
        <name>FAD</name>
        <dbReference type="ChEBI" id="CHEBI:57692"/>
    </ligand>
</feature>
<feature type="binding site" evidence="2">
    <location>
        <position position="264"/>
    </location>
    <ligand>
        <name>FAD</name>
        <dbReference type="ChEBI" id="CHEBI:57692"/>
    </ligand>
</feature>
<feature type="binding site" evidence="2">
    <location>
        <begin position="473"/>
        <end position="475"/>
    </location>
    <ligand>
        <name>FAD</name>
        <dbReference type="ChEBI" id="CHEBI:57692"/>
    </ligand>
</feature>
<feature type="strand" evidence="5">
    <location>
        <begin position="15"/>
        <end position="19"/>
    </location>
</feature>
<feature type="helix" evidence="5">
    <location>
        <begin position="23"/>
        <end position="33"/>
    </location>
</feature>
<feature type="strand" evidence="5">
    <location>
        <begin position="38"/>
        <end position="42"/>
    </location>
</feature>
<feature type="strand" evidence="5">
    <location>
        <begin position="44"/>
        <end position="48"/>
    </location>
</feature>
<feature type="strand" evidence="5">
    <location>
        <begin position="54"/>
        <end position="57"/>
    </location>
</feature>
<feature type="strand" evidence="5">
    <location>
        <begin position="60"/>
        <end position="65"/>
    </location>
</feature>
<feature type="helix" evidence="5">
    <location>
        <begin position="74"/>
        <end position="82"/>
    </location>
</feature>
<feature type="helix" evidence="5">
    <location>
        <begin position="86"/>
        <end position="88"/>
    </location>
</feature>
<feature type="strand" evidence="5">
    <location>
        <begin position="98"/>
        <end position="108"/>
    </location>
</feature>
<feature type="helix" evidence="5">
    <location>
        <begin position="113"/>
        <end position="118"/>
    </location>
</feature>
<feature type="strand" evidence="5">
    <location>
        <begin position="119"/>
        <end position="122"/>
    </location>
</feature>
<feature type="helix" evidence="5">
    <location>
        <begin position="124"/>
        <end position="131"/>
    </location>
</feature>
<feature type="helix" evidence="5">
    <location>
        <begin position="133"/>
        <end position="136"/>
    </location>
</feature>
<feature type="helix" evidence="5">
    <location>
        <begin position="152"/>
        <end position="160"/>
    </location>
</feature>
<feature type="helix" evidence="5">
    <location>
        <begin position="162"/>
        <end position="166"/>
    </location>
</feature>
<feature type="helix" evidence="5">
    <location>
        <begin position="169"/>
        <end position="177"/>
    </location>
</feature>
<feature type="helix" evidence="5">
    <location>
        <begin position="181"/>
        <end position="183"/>
    </location>
</feature>
<feature type="helix" evidence="5">
    <location>
        <begin position="186"/>
        <end position="189"/>
    </location>
</feature>
<feature type="helix" evidence="5">
    <location>
        <begin position="191"/>
        <end position="199"/>
    </location>
</feature>
<feature type="helix" evidence="5">
    <location>
        <begin position="203"/>
        <end position="210"/>
    </location>
</feature>
<feature type="strand" evidence="5">
    <location>
        <begin position="236"/>
        <end position="238"/>
    </location>
</feature>
<feature type="helix" evidence="5">
    <location>
        <begin position="243"/>
        <end position="250"/>
    </location>
</feature>
<feature type="turn" evidence="5">
    <location>
        <begin position="255"/>
        <end position="257"/>
    </location>
</feature>
<feature type="strand" evidence="5">
    <location>
        <begin position="264"/>
        <end position="270"/>
    </location>
</feature>
<feature type="strand" evidence="5">
    <location>
        <begin position="272"/>
        <end position="277"/>
    </location>
</feature>
<feature type="strand" evidence="5">
    <location>
        <begin position="279"/>
        <end position="285"/>
    </location>
</feature>
<feature type="strand" evidence="5">
    <location>
        <begin position="287"/>
        <end position="290"/>
    </location>
</feature>
<feature type="strand" evidence="5">
    <location>
        <begin position="296"/>
        <end position="302"/>
    </location>
</feature>
<feature type="helix" evidence="5">
    <location>
        <begin position="306"/>
        <end position="310"/>
    </location>
</feature>
<feature type="strand" evidence="5">
    <location>
        <begin position="312"/>
        <end position="320"/>
    </location>
</feature>
<feature type="strand" evidence="5">
    <location>
        <begin position="331"/>
        <end position="342"/>
    </location>
</feature>
<feature type="helix" evidence="5">
    <location>
        <begin position="343"/>
        <end position="345"/>
    </location>
</feature>
<feature type="strand" evidence="5">
    <location>
        <begin position="346"/>
        <end position="348"/>
    </location>
</feature>
<feature type="strand" evidence="5">
    <location>
        <begin position="352"/>
        <end position="356"/>
    </location>
</feature>
<feature type="helix" evidence="5">
    <location>
        <begin position="359"/>
        <end position="364"/>
    </location>
</feature>
<feature type="strand" evidence="5">
    <location>
        <begin position="368"/>
        <end position="373"/>
    </location>
</feature>
<feature type="helix" evidence="5">
    <location>
        <begin position="374"/>
        <end position="377"/>
    </location>
</feature>
<feature type="helix" evidence="5">
    <location>
        <begin position="379"/>
        <end position="381"/>
    </location>
</feature>
<feature type="strand" evidence="5">
    <location>
        <begin position="386"/>
        <end position="395"/>
    </location>
</feature>
<feature type="helix" evidence="5">
    <location>
        <begin position="399"/>
        <end position="401"/>
    </location>
</feature>
<feature type="helix" evidence="5">
    <location>
        <begin position="406"/>
        <end position="421"/>
    </location>
</feature>
<feature type="strand" evidence="5">
    <location>
        <begin position="428"/>
        <end position="440"/>
    </location>
</feature>
<feature type="helix" evidence="5">
    <location>
        <begin position="446"/>
        <end position="459"/>
    </location>
</feature>
<feature type="strand" evidence="5">
    <location>
        <begin position="463"/>
        <end position="465"/>
    </location>
</feature>
<feature type="strand" evidence="5">
    <location>
        <begin position="468"/>
        <end position="471"/>
    </location>
</feature>
<feature type="helix" evidence="5">
    <location>
        <begin position="475"/>
        <end position="493"/>
    </location>
</feature>
<evidence type="ECO:0000256" key="1">
    <source>
        <dbReference type="SAM" id="MobiDB-lite"/>
    </source>
</evidence>
<evidence type="ECO:0000269" key="2">
    <source>
    </source>
</evidence>
<evidence type="ECO:0000269" key="3">
    <source>
    </source>
</evidence>
<evidence type="ECO:0000305" key="4"/>
<evidence type="ECO:0007829" key="5">
    <source>
        <dbReference type="PDB" id="1SEZ"/>
    </source>
</evidence>
<proteinExistence type="evidence at protein level"/>
<organism>
    <name type="scientific">Nicotiana tabacum</name>
    <name type="common">Common tobacco</name>
    <dbReference type="NCBI Taxonomy" id="4097"/>
    <lineage>
        <taxon>Eukaryota</taxon>
        <taxon>Viridiplantae</taxon>
        <taxon>Streptophyta</taxon>
        <taxon>Embryophyta</taxon>
        <taxon>Tracheophyta</taxon>
        <taxon>Spermatophyta</taxon>
        <taxon>Magnoliopsida</taxon>
        <taxon>eudicotyledons</taxon>
        <taxon>Gunneridae</taxon>
        <taxon>Pentapetalae</taxon>
        <taxon>asterids</taxon>
        <taxon>lamiids</taxon>
        <taxon>Solanales</taxon>
        <taxon>Solanaceae</taxon>
        <taxon>Nicotianoideae</taxon>
        <taxon>Nicotianeae</taxon>
        <taxon>Nicotiana</taxon>
    </lineage>
</organism>
<keyword id="KW-0002">3D-structure</keyword>
<keyword id="KW-0274">FAD</keyword>
<keyword id="KW-0285">Flavoprotein</keyword>
<keyword id="KW-0350">Heme biosynthesis</keyword>
<keyword id="KW-0496">Mitochondrion</keyword>
<keyword id="KW-0560">Oxidoreductase</keyword>
<keyword id="KW-0627">Porphyrin biosynthesis</keyword>
<keyword id="KW-1185">Reference proteome</keyword>
<name>PPOM_TOBAC</name>